<proteinExistence type="evidence at transcript level"/>
<comment type="function">
    <text evidence="1">Plays an important role in stimulating the translation of viral mRNAs. These mRNAs are capped but not polyadenylated, instead terminating in a conserved sequence 'GACC' at the 3' that is recognized by NSP3, which competes with host PABPC1 for EIF4G1 binding. The interaction between NSP3 and host EIF4G1 stabilizes the EIF4E-EIF4G1 interaction, thereby facilitating the initiation of capped mRNA translation.</text>
</comment>
<comment type="subunit">
    <text evidence="1">Homodimer. Interacts (via the coiled-coil region) with host ZC3H7B (via LD motif). Interacts with host EIF4G1.</text>
</comment>
<comment type="subcellular location">
    <subcellularLocation>
        <location evidence="1">Host cytoplasm</location>
    </subcellularLocation>
</comment>
<comment type="similarity">
    <text evidence="1">Belongs to the rotavirus NSP3 family.</text>
</comment>
<dbReference type="EMBL" id="X81428">
    <property type="protein sequence ID" value="CAA57187.1"/>
    <property type="molecule type" value="mRNA"/>
</dbReference>
<dbReference type="PIR" id="S51729">
    <property type="entry name" value="S51729"/>
</dbReference>
<dbReference type="SMR" id="Q82052"/>
<dbReference type="GO" id="GO:0030430">
    <property type="term" value="C:host cell cytoplasm"/>
    <property type="evidence" value="ECO:0007669"/>
    <property type="project" value="UniProtKB-SubCell"/>
</dbReference>
<dbReference type="GO" id="GO:0003723">
    <property type="term" value="F:RNA binding"/>
    <property type="evidence" value="ECO:0007669"/>
    <property type="project" value="UniProtKB-UniRule"/>
</dbReference>
<dbReference type="GO" id="GO:0006417">
    <property type="term" value="P:regulation of translation"/>
    <property type="evidence" value="ECO:0007669"/>
    <property type="project" value="UniProtKB-UniRule"/>
</dbReference>
<dbReference type="CDD" id="cd20714">
    <property type="entry name" value="NSP3_rotavirus"/>
    <property type="match status" value="1"/>
</dbReference>
<dbReference type="Gene3D" id="3.30.70.1610">
    <property type="match status" value="1"/>
</dbReference>
<dbReference type="Gene3D" id="1.20.5.970">
    <property type="entry name" value="Nonstructural RNA-binding protein"/>
    <property type="match status" value="1"/>
</dbReference>
<dbReference type="Gene3D" id="6.10.280.20">
    <property type="entry name" value="Rotavirus non-structural protein NSP3, N-terminal domain"/>
    <property type="match status" value="1"/>
</dbReference>
<dbReference type="HAMAP" id="MF_04094">
    <property type="entry name" value="ROTA_A_NSP3"/>
    <property type="match status" value="1"/>
</dbReference>
<dbReference type="HAMAP" id="MF_04090">
    <property type="entry name" value="ROTA_NSP3"/>
    <property type="match status" value="1"/>
</dbReference>
<dbReference type="InterPro" id="IPR042519">
    <property type="entry name" value="NSP3_N_rotavirus"/>
</dbReference>
<dbReference type="InterPro" id="IPR036082">
    <property type="entry name" value="NSP3_sf"/>
</dbReference>
<dbReference type="InterPro" id="IPR002873">
    <property type="entry name" value="Rotavirus_NSP3"/>
</dbReference>
<dbReference type="Pfam" id="PF01665">
    <property type="entry name" value="Rota_NSP3"/>
    <property type="match status" value="1"/>
</dbReference>
<dbReference type="SUPFAM" id="SSF69903">
    <property type="entry name" value="NSP3 homodimer"/>
    <property type="match status" value="1"/>
</dbReference>
<dbReference type="SUPFAM" id="SSF58030">
    <property type="entry name" value="Rotavirus nonstructural proteins"/>
    <property type="match status" value="1"/>
</dbReference>
<name>NSP3_ROTHS</name>
<evidence type="ECO:0000255" key="1">
    <source>
        <dbReference type="HAMAP-Rule" id="MF_04094"/>
    </source>
</evidence>
<organism>
    <name type="scientific">Rotavirus A (strain RVA/Human/Japan/S2/1980/G2P1B[4])</name>
    <name type="common">RV-A</name>
    <dbReference type="NCBI Taxonomy" id="10959"/>
    <lineage>
        <taxon>Viruses</taxon>
        <taxon>Riboviria</taxon>
        <taxon>Orthornavirae</taxon>
        <taxon>Duplornaviricota</taxon>
        <taxon>Resentoviricetes</taxon>
        <taxon>Reovirales</taxon>
        <taxon>Sedoreoviridae</taxon>
        <taxon>Rotavirus</taxon>
        <taxon>Rotavirus A</taxon>
    </lineage>
</organism>
<protein>
    <recommendedName>
        <fullName evidence="1">Non-structural protein 3</fullName>
        <shortName evidence="1">NSP3</shortName>
    </recommendedName>
    <alternativeName>
        <fullName evidence="1">NCVP4</fullName>
    </alternativeName>
    <alternativeName>
        <fullName evidence="1">Non-structural RNA-binding protein 34</fullName>
        <shortName evidence="1">NS34</shortName>
    </alternativeName>
</protein>
<reference key="1">
    <citation type="journal article" date="1995" name="Virology">
        <title>Comparative nucleotide and amino acid sequence analysis of the sequence-specific RNA-binding rotavirus nonstructural protein NSP3.</title>
        <authorList>
            <person name="Rao C.D."/>
            <person name="Das M."/>
            <person name="Ilango P."/>
            <person name="Lalwani R."/>
            <person name="Rao B.S."/>
            <person name="Gowda K."/>
        </authorList>
    </citation>
    <scope>NUCLEOTIDE SEQUENCE [MRNA]</scope>
</reference>
<sequence length="313" mass="36389">MLKMESTQQMASSIINSSFEAAVVAATSTLELMGIQYDYNEVYTRVKSKFDFVMDDSGVENNLMGKAATIDQALNGKFSSSIRNRNWMTDSKTVARLDEDVNKLRLLLSSKGIDQKMRVLNACFSVKRVPGKSSSVIKCTRLMKEKIERGEVEVDDTFIEERMEIDTIDWKSRYDQLERRFESLKQRVNEKYNNWVIKARKVNENMNSLQNVISQQQAHINELQIYNNKLERDLQSKIGSVISSIEWYLRSMELSDDIKSDIEQQLNSIDLINPVNAFDDFESILRNLISDYDRIFIMFKGLLQQSNYTYTYE</sequence>
<feature type="chain" id="PRO_0000369451" description="Non-structural protein 3">
    <location>
        <begin position="1"/>
        <end position="313"/>
    </location>
</feature>
<feature type="region of interest" description="RNA-binding" evidence="1">
    <location>
        <begin position="1"/>
        <end position="149"/>
    </location>
</feature>
<feature type="region of interest" description="Dimerization" evidence="1">
    <location>
        <begin position="150"/>
        <end position="206"/>
    </location>
</feature>
<feature type="region of interest" description="Interaction with host ZC3H7B" evidence="1">
    <location>
        <begin position="170"/>
        <end position="234"/>
    </location>
</feature>
<feature type="region of interest" description="Interaction with host EIF4G1" evidence="1">
    <location>
        <begin position="208"/>
        <end position="313"/>
    </location>
</feature>
<feature type="coiled-coil region" evidence="1">
    <location>
        <begin position="166"/>
        <end position="237"/>
    </location>
</feature>
<keyword id="KW-0175">Coiled coil</keyword>
<keyword id="KW-1035">Host cytoplasm</keyword>
<keyword id="KW-0945">Host-virus interaction</keyword>
<keyword id="KW-0694">RNA-binding</keyword>
<keyword id="KW-0810">Translation regulation</keyword>
<accession>Q82052</accession>
<organismHost>
    <name type="scientific">Homo sapiens</name>
    <name type="common">Human</name>
    <dbReference type="NCBI Taxonomy" id="9606"/>
</organismHost>